<geneLocation type="chloroplast"/>
<feature type="chain" id="PRO_0000207792" description="Photosystem I reaction center subunit IX">
    <location>
        <begin position="1"/>
        <end position="42"/>
    </location>
</feature>
<feature type="transmembrane region" description="Helical" evidence="1">
    <location>
        <begin position="7"/>
        <end position="27"/>
    </location>
</feature>
<accession>Q5SD35</accession>
<dbReference type="EMBL" id="AY660566">
    <property type="protein sequence ID" value="AAT80705.1"/>
    <property type="molecule type" value="Genomic_DNA"/>
</dbReference>
<dbReference type="RefSeq" id="YP_209509.1">
    <property type="nucleotide sequence ID" value="NC_006861.1"/>
</dbReference>
<dbReference type="SMR" id="Q5SD35"/>
<dbReference type="GeneID" id="3283836"/>
<dbReference type="GO" id="GO:0009535">
    <property type="term" value="C:chloroplast thylakoid membrane"/>
    <property type="evidence" value="ECO:0007669"/>
    <property type="project" value="UniProtKB-SubCell"/>
</dbReference>
<dbReference type="GO" id="GO:0009522">
    <property type="term" value="C:photosystem I"/>
    <property type="evidence" value="ECO:0007669"/>
    <property type="project" value="UniProtKB-KW"/>
</dbReference>
<dbReference type="GO" id="GO:0015979">
    <property type="term" value="P:photosynthesis"/>
    <property type="evidence" value="ECO:0007669"/>
    <property type="project" value="UniProtKB-UniRule"/>
</dbReference>
<dbReference type="Gene3D" id="1.20.5.510">
    <property type="entry name" value="Single helix bin"/>
    <property type="match status" value="1"/>
</dbReference>
<dbReference type="HAMAP" id="MF_00522">
    <property type="entry name" value="PSI_PsaJ"/>
    <property type="match status" value="1"/>
</dbReference>
<dbReference type="InterPro" id="IPR002615">
    <property type="entry name" value="PSI_PsaJ"/>
</dbReference>
<dbReference type="InterPro" id="IPR036062">
    <property type="entry name" value="PSI_PsaJ_sf"/>
</dbReference>
<dbReference type="PANTHER" id="PTHR36082">
    <property type="match status" value="1"/>
</dbReference>
<dbReference type="PANTHER" id="PTHR36082:SF2">
    <property type="entry name" value="PHOTOSYSTEM I REACTION CENTER SUBUNIT IX"/>
    <property type="match status" value="1"/>
</dbReference>
<dbReference type="Pfam" id="PF01701">
    <property type="entry name" value="PSI_PsaJ"/>
    <property type="match status" value="1"/>
</dbReference>
<dbReference type="SUPFAM" id="SSF81544">
    <property type="entry name" value="Subunit IX of photosystem I reaction centre, PsaJ"/>
    <property type="match status" value="1"/>
</dbReference>
<sequence length="42" mass="4718">MQDVETYLSTAPVLATLWFGFLAGLLIEINRFFPDALVFPSL</sequence>
<comment type="function">
    <text evidence="1">May help in the organization of the PsaE and PsaF subunits.</text>
</comment>
<comment type="subcellular location">
    <subcellularLocation>
        <location evidence="1">Plastid</location>
        <location evidence="1">Chloroplast thylakoid membrane</location>
        <topology evidence="1">Single-pass membrane protein</topology>
    </subcellularLocation>
</comment>
<comment type="similarity">
    <text evidence="1">Belongs to the PsaJ family.</text>
</comment>
<evidence type="ECO:0000255" key="1">
    <source>
        <dbReference type="HAMAP-Rule" id="MF_00522"/>
    </source>
</evidence>
<proteinExistence type="inferred from homology"/>
<gene>
    <name evidence="1" type="primary">psaJ</name>
</gene>
<reference key="1">
    <citation type="journal article" date="2005" name="Gene">
        <title>The first complete chloroplast genome sequence of a lycophyte, Huperzia lucidula (Lycopodiaceae).</title>
        <authorList>
            <person name="Wolf P.G."/>
            <person name="Karol K.G."/>
            <person name="Mandoli D.F."/>
            <person name="Kuehl J.V."/>
            <person name="Arumuganathan K."/>
            <person name="Ellis M.W."/>
            <person name="Mishler B.D."/>
            <person name="Kelch D.G."/>
            <person name="Olmstead R.G."/>
            <person name="Boore J.L."/>
        </authorList>
    </citation>
    <scope>NUCLEOTIDE SEQUENCE [LARGE SCALE GENOMIC DNA]</scope>
</reference>
<name>PSAJ_HUPLU</name>
<organism>
    <name type="scientific">Huperzia lucidula</name>
    <name type="common">Shining clubmoss</name>
    <name type="synonym">Lycopodium lucidulum</name>
    <dbReference type="NCBI Taxonomy" id="37429"/>
    <lineage>
        <taxon>Eukaryota</taxon>
        <taxon>Viridiplantae</taxon>
        <taxon>Streptophyta</taxon>
        <taxon>Embryophyta</taxon>
        <taxon>Tracheophyta</taxon>
        <taxon>Lycopodiopsida</taxon>
        <taxon>Lycopodiales</taxon>
        <taxon>Lycopodiaceae</taxon>
        <taxon>Huperzioideae</taxon>
        <taxon>Huperzia</taxon>
    </lineage>
</organism>
<keyword id="KW-0150">Chloroplast</keyword>
<keyword id="KW-0472">Membrane</keyword>
<keyword id="KW-0602">Photosynthesis</keyword>
<keyword id="KW-0603">Photosystem I</keyword>
<keyword id="KW-0934">Plastid</keyword>
<keyword id="KW-0793">Thylakoid</keyword>
<keyword id="KW-0812">Transmembrane</keyword>
<keyword id="KW-1133">Transmembrane helix</keyword>
<protein>
    <recommendedName>
        <fullName evidence="1">Photosystem I reaction center subunit IX</fullName>
    </recommendedName>
    <alternativeName>
        <fullName evidence="1">PSI-J</fullName>
    </alternativeName>
</protein>